<dbReference type="EC" id="4.2.3.25"/>
<dbReference type="EMBL" id="U58314">
    <property type="protein sequence ID" value="AAC49395.1"/>
    <property type="molecule type" value="mRNA"/>
</dbReference>
<dbReference type="SMR" id="Q96376"/>
<dbReference type="KEGG" id="ag:AAC49395"/>
<dbReference type="BioCyc" id="MetaCyc:MONOMER-13464"/>
<dbReference type="BRENDA" id="4.2.3.25">
    <property type="organism ID" value="1437"/>
</dbReference>
<dbReference type="GO" id="GO:0000287">
    <property type="term" value="F:magnesium ion binding"/>
    <property type="evidence" value="ECO:0007669"/>
    <property type="project" value="InterPro"/>
</dbReference>
<dbReference type="GO" id="GO:0034007">
    <property type="term" value="F:S-linalool synthase activity"/>
    <property type="evidence" value="ECO:0007669"/>
    <property type="project" value="UniProtKB-EC"/>
</dbReference>
<dbReference type="GO" id="GO:0010333">
    <property type="term" value="F:terpene synthase activity"/>
    <property type="evidence" value="ECO:0007669"/>
    <property type="project" value="InterPro"/>
</dbReference>
<dbReference type="GO" id="GO:0016102">
    <property type="term" value="P:diterpenoid biosynthetic process"/>
    <property type="evidence" value="ECO:0007669"/>
    <property type="project" value="TreeGrafter"/>
</dbReference>
<dbReference type="FunFam" id="1.10.600.10:FF:000036">
    <property type="entry name" value="cis-abienol synthase, chloroplastic"/>
    <property type="match status" value="1"/>
</dbReference>
<dbReference type="FunFam" id="1.50.10.130:FF:000002">
    <property type="entry name" value="Ent-copalyl diphosphate synthase, chloroplastic"/>
    <property type="match status" value="1"/>
</dbReference>
<dbReference type="Gene3D" id="1.50.10.160">
    <property type="match status" value="1"/>
</dbReference>
<dbReference type="Gene3D" id="1.10.600.10">
    <property type="entry name" value="Farnesyl Diphosphate Synthase"/>
    <property type="match status" value="1"/>
</dbReference>
<dbReference type="Gene3D" id="1.50.10.130">
    <property type="entry name" value="Terpene synthase, N-terminal domain"/>
    <property type="match status" value="1"/>
</dbReference>
<dbReference type="InterPro" id="IPR008949">
    <property type="entry name" value="Isoprenoid_synthase_dom_sf"/>
</dbReference>
<dbReference type="InterPro" id="IPR001906">
    <property type="entry name" value="Terpene_synth_N"/>
</dbReference>
<dbReference type="InterPro" id="IPR036965">
    <property type="entry name" value="Terpene_synth_N_sf"/>
</dbReference>
<dbReference type="InterPro" id="IPR050148">
    <property type="entry name" value="Terpene_synthase-like"/>
</dbReference>
<dbReference type="InterPro" id="IPR005630">
    <property type="entry name" value="Terpene_synthase_metal-bd"/>
</dbReference>
<dbReference type="InterPro" id="IPR008930">
    <property type="entry name" value="Terpenoid_cyclase/PrenylTrfase"/>
</dbReference>
<dbReference type="PANTHER" id="PTHR31739:SF25">
    <property type="entry name" value="(E,E)-GERANYLLINALOOL SYNTHASE"/>
    <property type="match status" value="1"/>
</dbReference>
<dbReference type="PANTHER" id="PTHR31739">
    <property type="entry name" value="ENT-COPALYL DIPHOSPHATE SYNTHASE, CHLOROPLASTIC"/>
    <property type="match status" value="1"/>
</dbReference>
<dbReference type="Pfam" id="PF01397">
    <property type="entry name" value="Terpene_synth"/>
    <property type="match status" value="1"/>
</dbReference>
<dbReference type="Pfam" id="PF03936">
    <property type="entry name" value="Terpene_synth_C"/>
    <property type="match status" value="1"/>
</dbReference>
<dbReference type="SFLD" id="SFLDG01014">
    <property type="entry name" value="Terpene_Cyclase_Like_1_N-term"/>
    <property type="match status" value="1"/>
</dbReference>
<dbReference type="SUPFAM" id="SSF48239">
    <property type="entry name" value="Terpenoid cyclases/Protein prenyltransferases"/>
    <property type="match status" value="2"/>
</dbReference>
<dbReference type="SUPFAM" id="SSF48576">
    <property type="entry name" value="Terpenoid synthases"/>
    <property type="match status" value="1"/>
</dbReference>
<reference key="1">
    <citation type="journal article" date="1996" name="Plant Cell">
        <title>Evolution of floral scent in Clarkia: novel patterns of S-linalool synthase gene expression in the C. breweri flower.</title>
        <authorList>
            <person name="Dudareva N."/>
            <person name="Cseke L."/>
            <person name="Blanc V.M."/>
            <person name="Pichersky E."/>
        </authorList>
    </citation>
    <scope>NUCLEOTIDE SEQUENCE [MRNA]</scope>
    <scope>FUNCTION</scope>
    <scope>TISSUE SPECIFICITY</scope>
</reference>
<proteinExistence type="evidence at transcript level"/>
<comment type="function">
    <text evidence="2">Involved in the biosynthesis of the acyclic monoterpene S-linalool, a major component of the strong sweet scent of the C.breweri flowers.</text>
</comment>
<comment type="catalytic activity">
    <reaction>
        <text>(2E)-geranyl diphosphate + H2O = (S)-linalool + diphosphate</text>
        <dbReference type="Rhea" id="RHEA:24116"/>
        <dbReference type="ChEBI" id="CHEBI:98"/>
        <dbReference type="ChEBI" id="CHEBI:15377"/>
        <dbReference type="ChEBI" id="CHEBI:33019"/>
        <dbReference type="ChEBI" id="CHEBI:58057"/>
        <dbReference type="EC" id="4.2.3.25"/>
    </reaction>
</comment>
<comment type="cofactor">
    <cofactor evidence="1">
        <name>Mg(2+)</name>
        <dbReference type="ChEBI" id="CHEBI:18420"/>
    </cofactor>
    <cofactor evidence="1">
        <name>Mn(2+)</name>
        <dbReference type="ChEBI" id="CHEBI:29035"/>
    </cofactor>
    <text evidence="1">Binds 3 Mg(2+) or Mn(2+) ions per subunit.</text>
</comment>
<comment type="tissue specificity">
    <text evidence="2">Highly expressed in cells of the transmitting tract of the stigma and style and in the epidermal cells of petals, as well as in stamens.</text>
</comment>
<comment type="domain">
    <text>The Asp-Asp-Xaa-Xaa-Asp/Glu (DDXXD/E) motif is important for the catalytic activity, presumably through binding to Mg(2+).</text>
</comment>
<comment type="similarity">
    <text evidence="3">Belongs to the terpene synthase family.</text>
</comment>
<keyword id="KW-0456">Lyase</keyword>
<keyword id="KW-0460">Magnesium</keyword>
<keyword id="KW-0464">Manganese</keyword>
<keyword id="KW-0479">Metal-binding</keyword>
<protein>
    <recommendedName>
        <fullName>S-linalool synthase</fullName>
        <ecNumber>4.2.3.25</ecNumber>
    </recommendedName>
</protein>
<evidence type="ECO:0000250" key="1"/>
<evidence type="ECO:0000269" key="2">
    <source>
    </source>
</evidence>
<evidence type="ECO:0000305" key="3"/>
<gene>
    <name type="primary">LIS</name>
</gene>
<feature type="chain" id="PRO_0000263074" description="S-linalool synthase">
    <location>
        <begin position="1"/>
        <end position="870"/>
    </location>
</feature>
<feature type="short sequence motif" description="DDXXD motif">
    <location>
        <begin position="547"/>
        <end position="551"/>
    </location>
</feature>
<feature type="binding site" evidence="1">
    <location>
        <position position="547"/>
    </location>
    <ligand>
        <name>Mg(2+)</name>
        <dbReference type="ChEBI" id="CHEBI:18420"/>
        <label>1</label>
    </ligand>
</feature>
<feature type="binding site" evidence="1">
    <location>
        <position position="547"/>
    </location>
    <ligand>
        <name>Mg(2+)</name>
        <dbReference type="ChEBI" id="CHEBI:18420"/>
        <label>2</label>
    </ligand>
</feature>
<feature type="binding site" evidence="1">
    <location>
        <position position="551"/>
    </location>
    <ligand>
        <name>Mg(2+)</name>
        <dbReference type="ChEBI" id="CHEBI:18420"/>
        <label>1</label>
    </ligand>
</feature>
<feature type="binding site" evidence="1">
    <location>
        <position position="551"/>
    </location>
    <ligand>
        <name>Mg(2+)</name>
        <dbReference type="ChEBI" id="CHEBI:18420"/>
        <label>2</label>
    </ligand>
</feature>
<feature type="binding site" evidence="1">
    <location>
        <position position="689"/>
    </location>
    <ligand>
        <name>Mg(2+)</name>
        <dbReference type="ChEBI" id="CHEBI:18420"/>
        <label>3</label>
    </ligand>
</feature>
<feature type="binding site" evidence="1">
    <location>
        <position position="693"/>
    </location>
    <ligand>
        <name>Mg(2+)</name>
        <dbReference type="ChEBI" id="CHEBI:18420"/>
        <label>3</label>
    </ligand>
</feature>
<feature type="binding site" evidence="1">
    <location>
        <position position="697"/>
    </location>
    <ligand>
        <name>Mg(2+)</name>
        <dbReference type="ChEBI" id="CHEBI:18420"/>
        <label>3</label>
    </ligand>
</feature>
<organism>
    <name type="scientific">Clarkia breweri</name>
    <name type="common">Fairy fans</name>
    <name type="synonym">Eucharidium breweri</name>
    <dbReference type="NCBI Taxonomy" id="36903"/>
    <lineage>
        <taxon>Eukaryota</taxon>
        <taxon>Viridiplantae</taxon>
        <taxon>Streptophyta</taxon>
        <taxon>Embryophyta</taxon>
        <taxon>Tracheophyta</taxon>
        <taxon>Spermatophyta</taxon>
        <taxon>Magnoliopsida</taxon>
        <taxon>eudicotyledons</taxon>
        <taxon>Gunneridae</taxon>
        <taxon>Pentapetalae</taxon>
        <taxon>rosids</taxon>
        <taxon>malvids</taxon>
        <taxon>Myrtales</taxon>
        <taxon>Onagraceae</taxon>
        <taxon>Onagroideae</taxon>
        <taxon>Onagreae</taxon>
        <taxon>Clarkia</taxon>
    </lineage>
</organism>
<accession>Q96376</accession>
<sequence>MQLITNFSSSSSELQFLVDKVKRESLSSSSSNTQNLFLSTSPYDTAWLALIPHPHHHHHHGRPMFEKCLQWILHNQTPQGFWAAAGDNISDTDDDVTLDCLLSTLACLVALKRWQLAPDMIHKGLEFVNRNTERLVMKQKPSDVPRWFTIMFPAMLELAGASSLRVDFSENLNRILVELSQNRDDILTREEVDEKKQYSPLLLFLEALPAQSYDNDVLKQIIDKNLSNDGSLLQSPSATARAYMITGNTRCLSYLHSLTNSCSNGGVPSFYPVDDDLHDLVMVNQLTRSGLTEHLIPEIDHLLLKVQKNYKYKKASPKSLYSIAAELYRDSLAFWLLRVNNHWVSPSIFCWFLDDDEIRDHIETNYEEFAAVLLNVYRATDLMFSGEVQLVEARSFATKNLEKILATGNIHKTNADISSSLHKMIEHELRVPWTARMDHVENRIWIEEIASSALWFGKSSYLRLSCFHKMSLQQLAVKNYTLRQLVYRDELAEVERWSKERGLCDMGFCREKTGYCYYAFAASTCLPWSSDVRLVLTKAAVVITVADDFFDVEGSMVDLEKLTDAVRRWDAEGLGSHSKTIFEALDDLVNEVRLKCFQQNGQDIKNNLQQLWYETFHSWLMEAKWGKGLTSKPSVDVYLGNAMTSIAAHTMVLTASCLLGPGFPVHQLWSQRRHQDITSLLMVLTRLLNDIQSYLKEEDEGKINYVWMYMIENNQASIDDSVRHVQTIINVKKQEFIQRVLSDQHCNLPKSFKQLHFSCLKVFNMFFNSSNIFDTDTDLLLDIHEAFVSPPQVPKFKPHIKPPHQLPATLQPPHQPQQIMVNKKKVEMVYKSYHHPFKVFTLQKKQSSGHGTMNPRASILAGPNIKLCFS</sequence>
<name>LIS_CLABR</name>